<comment type="function">
    <text evidence="1">One of the primary rRNA binding proteins, it binds directly to 16S rRNA central domain where it helps coordinate assembly of the platform of the 30S subunit.</text>
</comment>
<comment type="subunit">
    <text evidence="1">Part of the 30S ribosomal subunit. Contacts proteins S5 and S12.</text>
</comment>
<comment type="similarity">
    <text evidence="1">Belongs to the universal ribosomal protein uS8 family.</text>
</comment>
<keyword id="KW-1185">Reference proteome</keyword>
<keyword id="KW-0687">Ribonucleoprotein</keyword>
<keyword id="KW-0689">Ribosomal protein</keyword>
<keyword id="KW-0694">RNA-binding</keyword>
<keyword id="KW-0699">rRNA-binding</keyword>
<reference key="1">
    <citation type="journal article" date="2003" name="Proc. Natl. Acad. Sci. U.S.A.">
        <title>The complete genome sequence of Mycobacterium bovis.</title>
        <authorList>
            <person name="Garnier T."/>
            <person name="Eiglmeier K."/>
            <person name="Camus J.-C."/>
            <person name="Medina N."/>
            <person name="Mansoor H."/>
            <person name="Pryor M."/>
            <person name="Duthoy S."/>
            <person name="Grondin S."/>
            <person name="Lacroix C."/>
            <person name="Monsempe C."/>
            <person name="Simon S."/>
            <person name="Harris B."/>
            <person name="Atkin R."/>
            <person name="Doggett J."/>
            <person name="Mayes R."/>
            <person name="Keating L."/>
            <person name="Wheeler P.R."/>
            <person name="Parkhill J."/>
            <person name="Barrell B.G."/>
            <person name="Cole S.T."/>
            <person name="Gordon S.V."/>
            <person name="Hewinson R.G."/>
        </authorList>
    </citation>
    <scope>NUCLEOTIDE SEQUENCE [LARGE SCALE GENOMIC DNA]</scope>
    <source>
        <strain>ATCC BAA-935 / AF2122/97</strain>
    </source>
</reference>
<reference key="2">
    <citation type="journal article" date="2017" name="Genome Announc.">
        <title>Updated reference genome sequence and annotation of Mycobacterium bovis AF2122/97.</title>
        <authorList>
            <person name="Malone K.M."/>
            <person name="Farrell D."/>
            <person name="Stuber T.P."/>
            <person name="Schubert O.T."/>
            <person name="Aebersold R."/>
            <person name="Robbe-Austerman S."/>
            <person name="Gordon S.V."/>
        </authorList>
    </citation>
    <scope>NUCLEOTIDE SEQUENCE [LARGE SCALE GENOMIC DNA]</scope>
    <scope>GENOME REANNOTATION</scope>
    <source>
        <strain>ATCC BAA-935 / AF2122/97</strain>
    </source>
</reference>
<dbReference type="EMBL" id="LT708304">
    <property type="protein sequence ID" value="SIT99338.1"/>
    <property type="molecule type" value="Genomic_DNA"/>
</dbReference>
<dbReference type="RefSeq" id="NP_854397.1">
    <property type="nucleotide sequence ID" value="NC_002945.3"/>
</dbReference>
<dbReference type="RefSeq" id="WP_003403669.1">
    <property type="nucleotide sequence ID" value="NC_002945.4"/>
</dbReference>
<dbReference type="SMR" id="P66626"/>
<dbReference type="GeneID" id="45424683"/>
<dbReference type="KEGG" id="mbo:BQ2027_MB0739"/>
<dbReference type="PATRIC" id="fig|233413.5.peg.806"/>
<dbReference type="Proteomes" id="UP000001419">
    <property type="component" value="Chromosome"/>
</dbReference>
<dbReference type="GO" id="GO:1990904">
    <property type="term" value="C:ribonucleoprotein complex"/>
    <property type="evidence" value="ECO:0007669"/>
    <property type="project" value="UniProtKB-KW"/>
</dbReference>
<dbReference type="GO" id="GO:0005840">
    <property type="term" value="C:ribosome"/>
    <property type="evidence" value="ECO:0007669"/>
    <property type="project" value="UniProtKB-KW"/>
</dbReference>
<dbReference type="GO" id="GO:0019843">
    <property type="term" value="F:rRNA binding"/>
    <property type="evidence" value="ECO:0007669"/>
    <property type="project" value="UniProtKB-UniRule"/>
</dbReference>
<dbReference type="GO" id="GO:0003735">
    <property type="term" value="F:structural constituent of ribosome"/>
    <property type="evidence" value="ECO:0007669"/>
    <property type="project" value="InterPro"/>
</dbReference>
<dbReference type="GO" id="GO:0006412">
    <property type="term" value="P:translation"/>
    <property type="evidence" value="ECO:0007669"/>
    <property type="project" value="UniProtKB-UniRule"/>
</dbReference>
<dbReference type="FunFam" id="3.30.1370.30:FF:000002">
    <property type="entry name" value="30S ribosomal protein S8"/>
    <property type="match status" value="1"/>
</dbReference>
<dbReference type="FunFam" id="3.30.1490.10:FF:000001">
    <property type="entry name" value="30S ribosomal protein S8"/>
    <property type="match status" value="1"/>
</dbReference>
<dbReference type="Gene3D" id="3.30.1370.30">
    <property type="match status" value="1"/>
</dbReference>
<dbReference type="Gene3D" id="3.30.1490.10">
    <property type="match status" value="1"/>
</dbReference>
<dbReference type="HAMAP" id="MF_01302_B">
    <property type="entry name" value="Ribosomal_uS8_B"/>
    <property type="match status" value="1"/>
</dbReference>
<dbReference type="InterPro" id="IPR000630">
    <property type="entry name" value="Ribosomal_uS8"/>
</dbReference>
<dbReference type="InterPro" id="IPR047863">
    <property type="entry name" value="Ribosomal_uS8_CS"/>
</dbReference>
<dbReference type="InterPro" id="IPR035987">
    <property type="entry name" value="Ribosomal_uS8_sf"/>
</dbReference>
<dbReference type="NCBIfam" id="NF001109">
    <property type="entry name" value="PRK00136.1"/>
    <property type="match status" value="1"/>
</dbReference>
<dbReference type="PANTHER" id="PTHR11758">
    <property type="entry name" value="40S RIBOSOMAL PROTEIN S15A"/>
    <property type="match status" value="1"/>
</dbReference>
<dbReference type="Pfam" id="PF00410">
    <property type="entry name" value="Ribosomal_S8"/>
    <property type="match status" value="1"/>
</dbReference>
<dbReference type="SUPFAM" id="SSF56047">
    <property type="entry name" value="Ribosomal protein S8"/>
    <property type="match status" value="1"/>
</dbReference>
<dbReference type="PROSITE" id="PS00053">
    <property type="entry name" value="RIBOSOMAL_S8"/>
    <property type="match status" value="1"/>
</dbReference>
<feature type="chain" id="PRO_0000126449" description="Small ribosomal subunit protein uS8">
    <location>
        <begin position="1"/>
        <end position="132"/>
    </location>
</feature>
<proteinExistence type="inferred from homology"/>
<gene>
    <name evidence="1" type="primary">rpsH</name>
    <name type="ordered locus">BQ2027_MB0739</name>
</gene>
<protein>
    <recommendedName>
        <fullName evidence="1">Small ribosomal subunit protein uS8</fullName>
    </recommendedName>
    <alternativeName>
        <fullName evidence="2">30S ribosomal protein S8</fullName>
    </alternativeName>
</protein>
<sequence length="132" mass="14412">MTMTDPIADFLTRLRNANSAYHDEVSLPHSKLKANIAQILKNEGYISDFRTEDARVGKSLVIQLKYGPSRERSIAGLRRVSKPGLRVYAKSTNLPRVLGGLGVAIISTSSGLLTDRQAARQGVGGEVLAYVW</sequence>
<organism>
    <name type="scientific">Mycobacterium bovis (strain ATCC BAA-935 / AF2122/97)</name>
    <dbReference type="NCBI Taxonomy" id="233413"/>
    <lineage>
        <taxon>Bacteria</taxon>
        <taxon>Bacillati</taxon>
        <taxon>Actinomycetota</taxon>
        <taxon>Actinomycetes</taxon>
        <taxon>Mycobacteriales</taxon>
        <taxon>Mycobacteriaceae</taxon>
        <taxon>Mycobacterium</taxon>
        <taxon>Mycobacterium tuberculosis complex</taxon>
    </lineage>
</organism>
<evidence type="ECO:0000255" key="1">
    <source>
        <dbReference type="HAMAP-Rule" id="MF_01302"/>
    </source>
</evidence>
<evidence type="ECO:0000305" key="2"/>
<name>RS8_MYCBO</name>
<accession>P66626</accession>
<accession>A0A1R3XW76</accession>
<accession>P95066</accession>
<accession>X2BFX6</accession>